<organism>
    <name type="scientific">Nostoc punctiforme (strain ATCC 29133 / PCC 73102)</name>
    <dbReference type="NCBI Taxonomy" id="63737"/>
    <lineage>
        <taxon>Bacteria</taxon>
        <taxon>Bacillati</taxon>
        <taxon>Cyanobacteriota</taxon>
        <taxon>Cyanophyceae</taxon>
        <taxon>Nostocales</taxon>
        <taxon>Nostocaceae</taxon>
        <taxon>Nostoc</taxon>
    </lineage>
</organism>
<keyword id="KW-0028">Amino-acid biosynthesis</keyword>
<keyword id="KW-0055">Arginine biosynthesis</keyword>
<keyword id="KW-0963">Cytoplasm</keyword>
<keyword id="KW-1185">Reference proteome</keyword>
<keyword id="KW-0808">Transferase</keyword>
<proteinExistence type="inferred from homology"/>
<comment type="function">
    <text evidence="1">Reversibly catalyzes the transfer of the carbamoyl group from carbamoyl phosphate (CP) to the N(epsilon) atom of ornithine (ORN) to produce L-citrulline.</text>
</comment>
<comment type="catalytic activity">
    <reaction>
        <text>carbamoyl phosphate + L-ornithine = L-citrulline + phosphate + H(+)</text>
        <dbReference type="Rhea" id="RHEA:19513"/>
        <dbReference type="ChEBI" id="CHEBI:15378"/>
        <dbReference type="ChEBI" id="CHEBI:43474"/>
        <dbReference type="ChEBI" id="CHEBI:46911"/>
        <dbReference type="ChEBI" id="CHEBI:57743"/>
        <dbReference type="ChEBI" id="CHEBI:58228"/>
        <dbReference type="EC" id="2.1.3.3"/>
    </reaction>
</comment>
<comment type="pathway">
    <text>Amino-acid biosynthesis; L-arginine biosynthesis; L-arginine from L-ornithine and carbamoyl phosphate: step 1/3.</text>
</comment>
<comment type="subcellular location">
    <subcellularLocation>
        <location evidence="1">Cytoplasm</location>
    </subcellularLocation>
</comment>
<comment type="similarity">
    <text evidence="3">Belongs to the aspartate/ornithine carbamoyltransferase superfamily. OTCase family.</text>
</comment>
<feature type="chain" id="PRO_0000112974" description="Ornithine carbamoyltransferase">
    <location>
        <begin position="1"/>
        <end position="306"/>
    </location>
</feature>
<feature type="binding site" evidence="2">
    <location>
        <begin position="51"/>
        <end position="54"/>
    </location>
    <ligand>
        <name>carbamoyl phosphate</name>
        <dbReference type="ChEBI" id="CHEBI:58228"/>
    </ligand>
</feature>
<feature type="binding site" evidence="2">
    <location>
        <position position="78"/>
    </location>
    <ligand>
        <name>carbamoyl phosphate</name>
        <dbReference type="ChEBI" id="CHEBI:58228"/>
    </ligand>
</feature>
<feature type="binding site" evidence="2">
    <location>
        <position position="102"/>
    </location>
    <ligand>
        <name>carbamoyl phosphate</name>
        <dbReference type="ChEBI" id="CHEBI:58228"/>
    </ligand>
</feature>
<feature type="binding site" evidence="2">
    <location>
        <begin position="129"/>
        <end position="132"/>
    </location>
    <ligand>
        <name>carbamoyl phosphate</name>
        <dbReference type="ChEBI" id="CHEBI:58228"/>
    </ligand>
</feature>
<feature type="binding site" evidence="2">
    <location>
        <position position="160"/>
    </location>
    <ligand>
        <name>L-ornithine</name>
        <dbReference type="ChEBI" id="CHEBI:46911"/>
    </ligand>
</feature>
<feature type="binding site" evidence="2">
    <location>
        <position position="223"/>
    </location>
    <ligand>
        <name>L-ornithine</name>
        <dbReference type="ChEBI" id="CHEBI:46911"/>
    </ligand>
</feature>
<feature type="binding site" evidence="2">
    <location>
        <begin position="227"/>
        <end position="228"/>
    </location>
    <ligand>
        <name>L-ornithine</name>
        <dbReference type="ChEBI" id="CHEBI:46911"/>
    </ligand>
</feature>
<feature type="binding site" evidence="2">
    <location>
        <begin position="263"/>
        <end position="264"/>
    </location>
    <ligand>
        <name>carbamoyl phosphate</name>
        <dbReference type="ChEBI" id="CHEBI:58228"/>
    </ligand>
</feature>
<feature type="binding site" evidence="2">
    <location>
        <position position="291"/>
    </location>
    <ligand>
        <name>carbamoyl phosphate</name>
        <dbReference type="ChEBI" id="CHEBI:58228"/>
    </ligand>
</feature>
<feature type="sequence conflict" description="In Ref. 1; AAC36050." evidence="3" ref="1">
    <original>R</original>
    <variation>S</variation>
    <location>
        <position position="237"/>
    </location>
</feature>
<reference key="1">
    <citation type="journal article" date="1998" name="Physiol. Plantarum">
        <title>Cloning and molecular characterization of a presumptive argF, a structural gene encoding ornithine carbamoyl transferase (OCT), in the cyanobacterium Nostoc PCC 73102.</title>
        <authorList>
            <person name="Jansson E."/>
            <person name="Lindblad P."/>
        </authorList>
    </citation>
    <scope>NUCLEOTIDE SEQUENCE [GENOMIC DNA]</scope>
</reference>
<reference key="2">
    <citation type="journal article" date="2013" name="Plant Physiol.">
        <title>A Nostoc punctiforme Sugar Transporter Necessary to Establish a Cyanobacterium-Plant Symbiosis.</title>
        <authorList>
            <person name="Ekman M."/>
            <person name="Picossi S."/>
            <person name="Campbell E.L."/>
            <person name="Meeks J.C."/>
            <person name="Flores E."/>
        </authorList>
    </citation>
    <scope>NUCLEOTIDE SEQUENCE [LARGE SCALE GENOMIC DNA]</scope>
    <source>
        <strain>ATCC 29133 / PCC 73102</strain>
    </source>
</reference>
<sequence>MAALLGRDLLSLADISSTELQELLQLATQLKSQQLKLQCNKVLGLLFSKASTRTRVSFTVAMYQLGGQVIDLNPNVTQVSRGEPLQDTARVLDRYLDILAIRTFAQQDLETFAHYAKIPVINALTDAEHPCQVLADLLTIQESFNTLAGLTLTYVGDGNNMANSLMLGCALVGMNVRIATPDGYEPDSQIVEQARAIANNKTEVLLTHDPELAAKGSTVLYTDVWASMGQETEADNRMPIFQPYQISEQLLSLAAPEAIVLHCLPAHRGEEITEAVIEGSQSRVWEQAENRLHAQKALLASILGAE</sequence>
<dbReference type="EC" id="2.1.3.3"/>
<dbReference type="EMBL" id="AF030524">
    <property type="protein sequence ID" value="AAC36050.1"/>
    <property type="molecule type" value="Genomic_DNA"/>
</dbReference>
<dbReference type="EMBL" id="CP001037">
    <property type="protein sequence ID" value="ACC82847.1"/>
    <property type="molecule type" value="Genomic_DNA"/>
</dbReference>
<dbReference type="RefSeq" id="WP_012410808.1">
    <property type="nucleotide sequence ID" value="NC_010628.1"/>
</dbReference>
<dbReference type="SMR" id="O87319"/>
<dbReference type="STRING" id="63737.Npun_F4480"/>
<dbReference type="EnsemblBacteria" id="ACC82847">
    <property type="protein sequence ID" value="ACC82847"/>
    <property type="gene ID" value="Npun_F4480"/>
</dbReference>
<dbReference type="KEGG" id="npu:Npun_F4480"/>
<dbReference type="eggNOG" id="COG0078">
    <property type="taxonomic scope" value="Bacteria"/>
</dbReference>
<dbReference type="HOGENOM" id="CLU_043846_3_2_3"/>
<dbReference type="OrthoDB" id="9802587at2"/>
<dbReference type="PhylomeDB" id="O87319"/>
<dbReference type="UniPathway" id="UPA00068">
    <property type="reaction ID" value="UER00112"/>
</dbReference>
<dbReference type="Proteomes" id="UP000001191">
    <property type="component" value="Chromosome"/>
</dbReference>
<dbReference type="GO" id="GO:0005737">
    <property type="term" value="C:cytoplasm"/>
    <property type="evidence" value="ECO:0007669"/>
    <property type="project" value="UniProtKB-SubCell"/>
</dbReference>
<dbReference type="GO" id="GO:0016597">
    <property type="term" value="F:amino acid binding"/>
    <property type="evidence" value="ECO:0007669"/>
    <property type="project" value="InterPro"/>
</dbReference>
<dbReference type="GO" id="GO:0004585">
    <property type="term" value="F:ornithine carbamoyltransferase activity"/>
    <property type="evidence" value="ECO:0007669"/>
    <property type="project" value="UniProtKB-UniRule"/>
</dbReference>
<dbReference type="GO" id="GO:0042450">
    <property type="term" value="P:arginine biosynthetic process via ornithine"/>
    <property type="evidence" value="ECO:0007669"/>
    <property type="project" value="TreeGrafter"/>
</dbReference>
<dbReference type="GO" id="GO:0019240">
    <property type="term" value="P:citrulline biosynthetic process"/>
    <property type="evidence" value="ECO:0007669"/>
    <property type="project" value="TreeGrafter"/>
</dbReference>
<dbReference type="GO" id="GO:0006526">
    <property type="term" value="P:L-arginine biosynthetic process"/>
    <property type="evidence" value="ECO:0007669"/>
    <property type="project" value="UniProtKB-UniPathway"/>
</dbReference>
<dbReference type="FunFam" id="3.40.50.1370:FF:000008">
    <property type="entry name" value="Ornithine carbamoyltransferase"/>
    <property type="match status" value="1"/>
</dbReference>
<dbReference type="Gene3D" id="3.40.50.1370">
    <property type="entry name" value="Aspartate/ornithine carbamoyltransferase"/>
    <property type="match status" value="2"/>
</dbReference>
<dbReference type="HAMAP" id="MF_01109">
    <property type="entry name" value="OTCase"/>
    <property type="match status" value="1"/>
</dbReference>
<dbReference type="InterPro" id="IPR006132">
    <property type="entry name" value="Asp/Orn_carbamoyltranf_P-bd"/>
</dbReference>
<dbReference type="InterPro" id="IPR006130">
    <property type="entry name" value="Asp/Orn_carbamoylTrfase"/>
</dbReference>
<dbReference type="InterPro" id="IPR036901">
    <property type="entry name" value="Asp/Orn_carbamoylTrfase_sf"/>
</dbReference>
<dbReference type="InterPro" id="IPR006131">
    <property type="entry name" value="Asp_carbamoyltransf_Asp/Orn-bd"/>
</dbReference>
<dbReference type="InterPro" id="IPR002292">
    <property type="entry name" value="Orn/put_carbamltrans"/>
</dbReference>
<dbReference type="InterPro" id="IPR024904">
    <property type="entry name" value="OTCase_ArgI"/>
</dbReference>
<dbReference type="NCBIfam" id="TIGR00658">
    <property type="entry name" value="orni_carb_tr"/>
    <property type="match status" value="1"/>
</dbReference>
<dbReference type="NCBIfam" id="NF001986">
    <property type="entry name" value="PRK00779.1"/>
    <property type="match status" value="1"/>
</dbReference>
<dbReference type="PANTHER" id="PTHR45753">
    <property type="entry name" value="ORNITHINE CARBAMOYLTRANSFERASE, MITOCHONDRIAL"/>
    <property type="match status" value="1"/>
</dbReference>
<dbReference type="PANTHER" id="PTHR45753:SF3">
    <property type="entry name" value="ORNITHINE TRANSCARBAMYLASE, MITOCHONDRIAL"/>
    <property type="match status" value="1"/>
</dbReference>
<dbReference type="Pfam" id="PF00185">
    <property type="entry name" value="OTCace"/>
    <property type="match status" value="1"/>
</dbReference>
<dbReference type="Pfam" id="PF02729">
    <property type="entry name" value="OTCace_N"/>
    <property type="match status" value="1"/>
</dbReference>
<dbReference type="PRINTS" id="PR00100">
    <property type="entry name" value="AOTCASE"/>
</dbReference>
<dbReference type="PRINTS" id="PR00102">
    <property type="entry name" value="OTCASE"/>
</dbReference>
<dbReference type="SUPFAM" id="SSF53671">
    <property type="entry name" value="Aspartate/ornithine carbamoyltransferase"/>
    <property type="match status" value="1"/>
</dbReference>
<dbReference type="PROSITE" id="PS00097">
    <property type="entry name" value="CARBAMOYLTRANSFERASE"/>
    <property type="match status" value="1"/>
</dbReference>
<protein>
    <recommendedName>
        <fullName>Ornithine carbamoyltransferase</fullName>
        <shortName>OTCase</shortName>
        <ecNumber>2.1.3.3</ecNumber>
    </recommendedName>
</protein>
<accession>O87319</accession>
<accession>B2IVN4</accession>
<evidence type="ECO:0000250" key="1"/>
<evidence type="ECO:0000255" key="2">
    <source>
        <dbReference type="HAMAP-Rule" id="MF_01109"/>
    </source>
</evidence>
<evidence type="ECO:0000305" key="3"/>
<name>OTC_NOSP7</name>
<gene>
    <name type="primary">argF</name>
    <name type="ordered locus">Npun_F4480</name>
</gene>